<name>DGTP_ENT38</name>
<accession>A4W6Q7</accession>
<feature type="chain" id="PRO_1000057229" description="Deoxyguanosinetriphosphate triphosphohydrolase">
    <location>
        <begin position="1"/>
        <end position="504"/>
    </location>
</feature>
<feature type="domain" description="HD" evidence="2">
    <location>
        <begin position="66"/>
        <end position="273"/>
    </location>
</feature>
<dbReference type="EC" id="3.1.5.1" evidence="1"/>
<dbReference type="EMBL" id="CP000653">
    <property type="protein sequence ID" value="ABP59387.1"/>
    <property type="molecule type" value="Genomic_DNA"/>
</dbReference>
<dbReference type="RefSeq" id="WP_012016108.1">
    <property type="nucleotide sequence ID" value="NC_009436.1"/>
</dbReference>
<dbReference type="SMR" id="A4W6Q7"/>
<dbReference type="STRING" id="399742.Ent638_0700"/>
<dbReference type="KEGG" id="ent:Ent638_0700"/>
<dbReference type="eggNOG" id="COG0232">
    <property type="taxonomic scope" value="Bacteria"/>
</dbReference>
<dbReference type="HOGENOM" id="CLU_028163_2_1_6"/>
<dbReference type="OrthoDB" id="9803619at2"/>
<dbReference type="Proteomes" id="UP000000230">
    <property type="component" value="Chromosome"/>
</dbReference>
<dbReference type="GO" id="GO:0008832">
    <property type="term" value="F:dGTPase activity"/>
    <property type="evidence" value="ECO:0007669"/>
    <property type="project" value="UniProtKB-UniRule"/>
</dbReference>
<dbReference type="GO" id="GO:0000287">
    <property type="term" value="F:magnesium ion binding"/>
    <property type="evidence" value="ECO:0007669"/>
    <property type="project" value="UniProtKB-UniRule"/>
</dbReference>
<dbReference type="GO" id="GO:0006203">
    <property type="term" value="P:dGTP catabolic process"/>
    <property type="evidence" value="ECO:0007669"/>
    <property type="project" value="InterPro"/>
</dbReference>
<dbReference type="CDD" id="cd00077">
    <property type="entry name" value="HDc"/>
    <property type="match status" value="1"/>
</dbReference>
<dbReference type="FunFam" id="1.10.3210.10:FF:000009">
    <property type="entry name" value="Deoxyguanosinetriphosphate triphosphohydrolase"/>
    <property type="match status" value="1"/>
</dbReference>
<dbReference type="FunFam" id="1.10.3210.10:FF:000010">
    <property type="entry name" value="Deoxyguanosinetriphosphate triphosphohydrolase"/>
    <property type="match status" value="1"/>
</dbReference>
<dbReference type="FunFam" id="1.10.3410.10:FF:000001">
    <property type="entry name" value="Deoxyguanosinetriphosphate triphosphohydrolase"/>
    <property type="match status" value="1"/>
</dbReference>
<dbReference type="Gene3D" id="1.10.3210.10">
    <property type="entry name" value="Hypothetical protein af1432"/>
    <property type="match status" value="2"/>
</dbReference>
<dbReference type="Gene3D" id="1.10.3410.10">
    <property type="entry name" value="putative deoxyguanosinetriphosphate triphosphohydrolase like domain"/>
    <property type="match status" value="1"/>
</dbReference>
<dbReference type="HAMAP" id="MF_00030">
    <property type="entry name" value="dGTPase_type1"/>
    <property type="match status" value="1"/>
</dbReference>
<dbReference type="InterPro" id="IPR023293">
    <property type="entry name" value="dGTP_triP_hydro_central_sf"/>
</dbReference>
<dbReference type="InterPro" id="IPR006261">
    <property type="entry name" value="dGTPase"/>
</dbReference>
<dbReference type="InterPro" id="IPR050135">
    <property type="entry name" value="dGTPase-like"/>
</dbReference>
<dbReference type="InterPro" id="IPR020779">
    <property type="entry name" value="dNTPase_1"/>
</dbReference>
<dbReference type="InterPro" id="IPR003607">
    <property type="entry name" value="HD/PDEase_dom"/>
</dbReference>
<dbReference type="InterPro" id="IPR006674">
    <property type="entry name" value="HD_domain"/>
</dbReference>
<dbReference type="InterPro" id="IPR026875">
    <property type="entry name" value="PHydrolase_assoc_dom"/>
</dbReference>
<dbReference type="NCBIfam" id="TIGR01353">
    <property type="entry name" value="dGTP_triPase"/>
    <property type="match status" value="1"/>
</dbReference>
<dbReference type="NCBIfam" id="NF003429">
    <property type="entry name" value="PRK04926.1"/>
    <property type="match status" value="1"/>
</dbReference>
<dbReference type="PANTHER" id="PTHR11373:SF32">
    <property type="entry name" value="DEOXYGUANOSINETRIPHOSPHATE TRIPHOSPHOHYDROLASE"/>
    <property type="match status" value="1"/>
</dbReference>
<dbReference type="PANTHER" id="PTHR11373">
    <property type="entry name" value="DEOXYNUCLEOSIDE TRIPHOSPHATE TRIPHOSPHOHYDROLASE"/>
    <property type="match status" value="1"/>
</dbReference>
<dbReference type="Pfam" id="PF01966">
    <property type="entry name" value="HD"/>
    <property type="match status" value="1"/>
</dbReference>
<dbReference type="Pfam" id="PF13286">
    <property type="entry name" value="HD_assoc"/>
    <property type="match status" value="1"/>
</dbReference>
<dbReference type="SMART" id="SM00471">
    <property type="entry name" value="HDc"/>
    <property type="match status" value="1"/>
</dbReference>
<dbReference type="SUPFAM" id="SSF109604">
    <property type="entry name" value="HD-domain/PDEase-like"/>
    <property type="match status" value="1"/>
</dbReference>
<dbReference type="PROSITE" id="PS51831">
    <property type="entry name" value="HD"/>
    <property type="match status" value="1"/>
</dbReference>
<comment type="function">
    <text evidence="1">dGTPase preferentially hydrolyzes dGTP over the other canonical NTPs.</text>
</comment>
<comment type="catalytic activity">
    <reaction evidence="1">
        <text>dGTP + H2O = 2'-deoxyguanosine + triphosphate + H(+)</text>
        <dbReference type="Rhea" id="RHEA:15193"/>
        <dbReference type="ChEBI" id="CHEBI:15377"/>
        <dbReference type="ChEBI" id="CHEBI:15378"/>
        <dbReference type="ChEBI" id="CHEBI:17172"/>
        <dbReference type="ChEBI" id="CHEBI:18036"/>
        <dbReference type="ChEBI" id="CHEBI:61429"/>
        <dbReference type="EC" id="3.1.5.1"/>
    </reaction>
</comment>
<comment type="cofactor">
    <cofactor evidence="1">
        <name>Mg(2+)</name>
        <dbReference type="ChEBI" id="CHEBI:18420"/>
    </cofactor>
</comment>
<comment type="subunit">
    <text evidence="1">Homotetramer.</text>
</comment>
<comment type="similarity">
    <text evidence="1">Belongs to the dGTPase family. Type 1 subfamily.</text>
</comment>
<reference key="1">
    <citation type="journal article" date="2010" name="PLoS Genet.">
        <title>Genome sequence of the plant growth promoting endophytic bacterium Enterobacter sp. 638.</title>
        <authorList>
            <person name="Taghavi S."/>
            <person name="van der Lelie D."/>
            <person name="Hoffman A."/>
            <person name="Zhang Y.B."/>
            <person name="Walla M.D."/>
            <person name="Vangronsveld J."/>
            <person name="Newman L."/>
            <person name="Monchy S."/>
        </authorList>
    </citation>
    <scope>NUCLEOTIDE SEQUENCE [LARGE SCALE GENOMIC DNA]</scope>
    <source>
        <strain>638</strain>
    </source>
</reference>
<organism>
    <name type="scientific">Enterobacter sp. (strain 638)</name>
    <dbReference type="NCBI Taxonomy" id="399742"/>
    <lineage>
        <taxon>Bacteria</taxon>
        <taxon>Pseudomonadati</taxon>
        <taxon>Pseudomonadota</taxon>
        <taxon>Gammaproteobacteria</taxon>
        <taxon>Enterobacterales</taxon>
        <taxon>Enterobacteriaceae</taxon>
        <taxon>Enterobacter</taxon>
    </lineage>
</organism>
<keyword id="KW-0378">Hydrolase</keyword>
<keyword id="KW-0460">Magnesium</keyword>
<sequence length="504" mass="59142">MAPIDFRNKINWHRRFRSPQGSKSEHEILRIFESDRGRIINSPAIRRLQQKTQVFPLERNAAVRTRLTHSMEVQQVGRYIAKEILSRLKEQRLLETYGLDELTGPFESIVEMACLMHDIGNPPFGHFGEAAINDWFKQRLFPLDAASQPQSDDRCIVRDLRLREGEEPLNDLRRKVRQDLCQFEGNAQGIRLVHSLMRMNLTWAQVGCILKYTRPAWWMGEPPASHSYLMKKPGYYLSEEAYIERLRKELSLTPHGRFPLTWIMEAADDISYCVADLEDAVEKRIFSVEELYQHLYDAWGTHEKGSLFSQVVENAWDKSRSNTLSRSTEDQFFMYLRVNTLNKLVPYSAARFIDNLPAIFSGDFNHALLEDDSSFSQLLELYKNVAIRHVFSHPDVEQLELQGYRVISGLLDIYQPLLKLSVEEFTELVETDLMKRLPIETRLLHKLSTRHRLAYVEAVSKIDRTTAQWPVMEYYYRCRLIQDYISGMTDLYAWDEYRRLMAVE</sequence>
<proteinExistence type="inferred from homology"/>
<gene>
    <name evidence="1" type="primary">dgt</name>
    <name type="ordered locus">Ent638_0700</name>
</gene>
<protein>
    <recommendedName>
        <fullName evidence="1">Deoxyguanosinetriphosphate triphosphohydrolase</fullName>
        <shortName evidence="1">dGTP triphosphohydrolase</shortName>
        <shortName evidence="1">dGTPase</shortName>
        <ecNumber evidence="1">3.1.5.1</ecNumber>
    </recommendedName>
</protein>
<evidence type="ECO:0000255" key="1">
    <source>
        <dbReference type="HAMAP-Rule" id="MF_00030"/>
    </source>
</evidence>
<evidence type="ECO:0000255" key="2">
    <source>
        <dbReference type="PROSITE-ProRule" id="PRU01175"/>
    </source>
</evidence>